<name>PTLCB_STAEQ</name>
<organism>
    <name type="scientific">Staphylococcus epidermidis (strain ATCC 35984 / DSM 28319 / BCRC 17069 / CCUG 31568 / BM 3577 / RP62A)</name>
    <dbReference type="NCBI Taxonomy" id="176279"/>
    <lineage>
        <taxon>Bacteria</taxon>
        <taxon>Bacillati</taxon>
        <taxon>Bacillota</taxon>
        <taxon>Bacilli</taxon>
        <taxon>Bacillales</taxon>
        <taxon>Staphylococcaceae</taxon>
        <taxon>Staphylococcus</taxon>
    </lineage>
</organism>
<evidence type="ECO:0000250" key="1">
    <source>
        <dbReference type="UniProtKB" id="P11162"/>
    </source>
</evidence>
<evidence type="ECO:0000255" key="2">
    <source>
        <dbReference type="PROSITE-ProRule" id="PRU00423"/>
    </source>
</evidence>
<evidence type="ECO:0000255" key="3">
    <source>
        <dbReference type="PROSITE-ProRule" id="PRU00428"/>
    </source>
</evidence>
<evidence type="ECO:0000256" key="4">
    <source>
        <dbReference type="SAM" id="MobiDB-lite"/>
    </source>
</evidence>
<proteinExistence type="inferred from homology"/>
<keyword id="KW-1003">Cell membrane</keyword>
<keyword id="KW-0418">Kinase</keyword>
<keyword id="KW-0472">Membrane</keyword>
<keyword id="KW-0597">Phosphoprotein</keyword>
<keyword id="KW-0598">Phosphotransferase system</keyword>
<keyword id="KW-1185">Reference proteome</keyword>
<keyword id="KW-0762">Sugar transport</keyword>
<keyword id="KW-0808">Transferase</keyword>
<keyword id="KW-0812">Transmembrane</keyword>
<keyword id="KW-1133">Transmembrane helix</keyword>
<keyword id="KW-0813">Transport</keyword>
<gene>
    <name evidence="1" type="primary">lacE</name>
    <name type="ordered locus">SERP1790</name>
</gene>
<accession>Q5HM40</accession>
<protein>
    <recommendedName>
        <fullName evidence="1">PTS system lactose-specific EIICB component</fullName>
    </recommendedName>
    <alternativeName>
        <fullName evidence="1">EIICB-Lac</fullName>
        <shortName evidence="1">EII-Lac</shortName>
    </alternativeName>
    <domain>
        <recommendedName>
            <fullName evidence="1">PTS system lactose-specific EIIC component</fullName>
        </recommendedName>
        <alternativeName>
            <fullName evidence="1">Lactose permease IIC component</fullName>
        </alternativeName>
    </domain>
    <domain>
        <recommendedName>
            <fullName evidence="1">PTS system lactose-specific EIIB component</fullName>
            <ecNumber evidence="1">2.7.1.207</ecNumber>
        </recommendedName>
        <alternativeName>
            <fullName evidence="1">Lactose-specific phosphotransferase enzyme IIB component</fullName>
        </alternativeName>
    </domain>
</protein>
<dbReference type="EC" id="2.7.1.207" evidence="1"/>
<dbReference type="EMBL" id="CP000029">
    <property type="protein sequence ID" value="AAW55166.1"/>
    <property type="molecule type" value="Genomic_DNA"/>
</dbReference>
<dbReference type="RefSeq" id="WP_001829731.1">
    <property type="nucleotide sequence ID" value="NC_002976.3"/>
</dbReference>
<dbReference type="SMR" id="Q5HM40"/>
<dbReference type="STRING" id="176279.SERP1790"/>
<dbReference type="KEGG" id="ser:SERP1790"/>
<dbReference type="eggNOG" id="COG1440">
    <property type="taxonomic scope" value="Bacteria"/>
</dbReference>
<dbReference type="eggNOG" id="COG1455">
    <property type="taxonomic scope" value="Bacteria"/>
</dbReference>
<dbReference type="HOGENOM" id="CLU_029688_0_0_9"/>
<dbReference type="Proteomes" id="UP000000531">
    <property type="component" value="Chromosome"/>
</dbReference>
<dbReference type="GO" id="GO:0005886">
    <property type="term" value="C:plasma membrane"/>
    <property type="evidence" value="ECO:0007669"/>
    <property type="project" value="UniProtKB-SubCell"/>
</dbReference>
<dbReference type="GO" id="GO:0016301">
    <property type="term" value="F:kinase activity"/>
    <property type="evidence" value="ECO:0007669"/>
    <property type="project" value="UniProtKB-KW"/>
</dbReference>
<dbReference type="GO" id="GO:0022869">
    <property type="term" value="F:protein-N(PI)-phosphohistidine-lactose phosphotransferase system transporter activity"/>
    <property type="evidence" value="ECO:0007669"/>
    <property type="project" value="InterPro"/>
</dbReference>
<dbReference type="GO" id="GO:1901264">
    <property type="term" value="P:carbohydrate derivative transport"/>
    <property type="evidence" value="ECO:0007669"/>
    <property type="project" value="TreeGrafter"/>
</dbReference>
<dbReference type="GO" id="GO:0009401">
    <property type="term" value="P:phosphoenolpyruvate-dependent sugar phosphotransferase system"/>
    <property type="evidence" value="ECO:0007669"/>
    <property type="project" value="UniProtKB-KW"/>
</dbReference>
<dbReference type="CDD" id="cd05565">
    <property type="entry name" value="PTS_IIB_lactose"/>
    <property type="match status" value="1"/>
</dbReference>
<dbReference type="Gene3D" id="3.40.50.2300">
    <property type="match status" value="1"/>
</dbReference>
<dbReference type="InterPro" id="IPR004801">
    <property type="entry name" value="LacE"/>
</dbReference>
<dbReference type="InterPro" id="IPR036095">
    <property type="entry name" value="PTS_EIIB-like_sf"/>
</dbReference>
<dbReference type="InterPro" id="IPR003501">
    <property type="entry name" value="PTS_EIIB_2/3"/>
</dbReference>
<dbReference type="InterPro" id="IPR013012">
    <property type="entry name" value="PTS_EIIB_3"/>
</dbReference>
<dbReference type="InterPro" id="IPR003352">
    <property type="entry name" value="PTS_EIIC"/>
</dbReference>
<dbReference type="InterPro" id="IPR004501">
    <property type="entry name" value="PTS_EIIC_3"/>
</dbReference>
<dbReference type="InterPro" id="IPR041713">
    <property type="entry name" value="PTS_IIB"/>
</dbReference>
<dbReference type="InterPro" id="IPR051088">
    <property type="entry name" value="PTS_Sugar-EIIC/EIIB"/>
</dbReference>
<dbReference type="NCBIfam" id="TIGR00394">
    <property type="entry name" value="lac_pts_IIC"/>
    <property type="match status" value="1"/>
</dbReference>
<dbReference type="NCBIfam" id="TIGR00410">
    <property type="entry name" value="lacE"/>
    <property type="match status" value="1"/>
</dbReference>
<dbReference type="NCBIfam" id="TIGR00853">
    <property type="entry name" value="pts-lac"/>
    <property type="match status" value="1"/>
</dbReference>
<dbReference type="PANTHER" id="PTHR33989">
    <property type="match status" value="1"/>
</dbReference>
<dbReference type="PANTHER" id="PTHR33989:SF8">
    <property type="entry name" value="PERMEASE IIC COMPONENT"/>
    <property type="match status" value="1"/>
</dbReference>
<dbReference type="Pfam" id="PF02378">
    <property type="entry name" value="PTS_EIIC"/>
    <property type="match status" value="1"/>
</dbReference>
<dbReference type="Pfam" id="PF02302">
    <property type="entry name" value="PTS_IIB"/>
    <property type="match status" value="1"/>
</dbReference>
<dbReference type="SUPFAM" id="SSF52794">
    <property type="entry name" value="PTS system IIB component-like"/>
    <property type="match status" value="1"/>
</dbReference>
<dbReference type="PROSITE" id="PS51100">
    <property type="entry name" value="PTS_EIIB_TYPE_3"/>
    <property type="match status" value="1"/>
</dbReference>
<dbReference type="PROSITE" id="PS51105">
    <property type="entry name" value="PTS_EIIC_TYPE_3"/>
    <property type="match status" value="1"/>
</dbReference>
<feature type="chain" id="PRO_0000186593" description="PTS system lactose-specific EIICB component">
    <location>
        <begin position="1"/>
        <end position="582"/>
    </location>
</feature>
<feature type="transmembrane region" description="Helical" evidence="3">
    <location>
        <begin position="30"/>
        <end position="50"/>
    </location>
</feature>
<feature type="transmembrane region" description="Helical" evidence="3">
    <location>
        <begin position="64"/>
        <end position="84"/>
    </location>
</feature>
<feature type="transmembrane region" description="Helical" evidence="3">
    <location>
        <begin position="103"/>
        <end position="123"/>
    </location>
</feature>
<feature type="transmembrane region" description="Helical" evidence="3">
    <location>
        <begin position="137"/>
        <end position="157"/>
    </location>
</feature>
<feature type="transmembrane region" description="Helical" evidence="3">
    <location>
        <begin position="176"/>
        <end position="196"/>
    </location>
</feature>
<feature type="transmembrane region" description="Helical" evidence="3">
    <location>
        <begin position="222"/>
        <end position="242"/>
    </location>
</feature>
<feature type="transmembrane region" description="Helical" evidence="3">
    <location>
        <begin position="283"/>
        <end position="303"/>
    </location>
</feature>
<feature type="transmembrane region" description="Helical" evidence="3">
    <location>
        <begin position="339"/>
        <end position="359"/>
    </location>
</feature>
<feature type="transmembrane region" description="Helical" evidence="3">
    <location>
        <begin position="381"/>
        <end position="401"/>
    </location>
</feature>
<feature type="domain" description="PTS EIIC type-3" evidence="3">
    <location>
        <begin position="8"/>
        <end position="409"/>
    </location>
</feature>
<feature type="domain" description="PTS EIIB type-3" evidence="2">
    <location>
        <begin position="479"/>
        <end position="582"/>
    </location>
</feature>
<feature type="region of interest" description="Disordered" evidence="4">
    <location>
        <begin position="453"/>
        <end position="473"/>
    </location>
</feature>
<feature type="compositionally biased region" description="Low complexity" evidence="4">
    <location>
        <begin position="464"/>
        <end position="473"/>
    </location>
</feature>
<feature type="active site" description="Phosphocysteine intermediate; for EIIB activity" evidence="1">
    <location>
        <position position="486"/>
    </location>
</feature>
<feature type="modified residue" description="Phosphocysteine; by EIIA" evidence="1 2">
    <location>
        <position position="486"/>
    </location>
</feature>
<sequence length="582" mass="63765">MNKLIAWIEKGKPFFEKISRNIYLRAIRDGFIAAIPIILFSSIFILITYVPNVFGFTWSKTMEGILMKPYNYTMGIVGLLVAGTTAKSLTDSYNRKLDKTNQINFISTMMAAICGFLFLAADPVKDGGFSSAFMGTKGLLTAFISAFITVIVYNFFVKRNITIKMPKEVPPNISQVFKDIFPLSAVILILYALDLLSRAIVHTNVANAVLKVFEPLFTAADGWIGVTLIFGAFAFFWFVGIHGPSIVEPAIAAITYANLETNLHLIQAGEHADKVITPGTQMFVATMGGTGATLVVPFMFMWLTKSKRNKAIGRASVVPTFFGVNEPILFGAPLVLNPVFFIPFIFAPIVNIWIFKFFVDVLNMNSFSIFLPWTTPGPLGIVMGTGFAFWSFVLAILLIVVDVIIYYPFLKVYDEQVLEEELGNKEANNELKEKVSANFDTKKADAILATAGASEADTDDTSSVDETTSTSSTDTISEQTNVLVLCAGGGTSGLLANALNKAAEEYEVPVKAAAGGYGAHMDIMKDYQLIILAPQVASNFEDIKQDTDRLGIKLAKTEGAQYIKLTRDGEAALEFVKQQFNN</sequence>
<comment type="function">
    <text evidence="1">The phosphoenolpyruvate-dependent sugar phosphotransferase system (sugar PTS), a major carbohydrate active transport system, catalyzes the phosphorylation of incoming sugar substrates concomitantly with their translocation across the cell membrane. The enzyme II LacEF PTS system is involved in lactose transport.</text>
</comment>
<comment type="catalytic activity">
    <reaction evidence="1">
        <text>lactose(out) + N(pros)-phospho-L-histidyl-[protein] = lactose 6-phosphate(in) + L-histidyl-[protein]</text>
        <dbReference type="Rhea" id="RHEA:42400"/>
        <dbReference type="Rhea" id="RHEA-COMP:9745"/>
        <dbReference type="Rhea" id="RHEA-COMP:9746"/>
        <dbReference type="ChEBI" id="CHEBI:17716"/>
        <dbReference type="ChEBI" id="CHEBI:29979"/>
        <dbReference type="ChEBI" id="CHEBI:64837"/>
        <dbReference type="ChEBI" id="CHEBI:79080"/>
        <dbReference type="EC" id="2.7.1.207"/>
    </reaction>
</comment>
<comment type="subcellular location">
    <subcellularLocation>
        <location evidence="1 3">Cell membrane</location>
        <topology evidence="1 3">Multi-pass membrane protein</topology>
    </subcellularLocation>
</comment>
<comment type="induction">
    <text evidence="1">Induced by lactose, galactose and galactose-6-P. Repressed by glucose.</text>
</comment>
<comment type="domain">
    <text evidence="3">The EIIC type-3 domain forms the PTS system translocation channel and contains the specific substrate-binding site.</text>
</comment>
<comment type="domain">
    <text evidence="2">The PTS EIIB type-3 domain is phosphorylated by phospho-EIIA on a cysteinyl residue. Then, it transfers the phosphoryl group to the sugar substrate concomitantly with the sugar uptake processed by the PTS EIIC type-3 domain.</text>
</comment>
<reference key="1">
    <citation type="journal article" date="2005" name="J. Bacteriol.">
        <title>Insights on evolution of virulence and resistance from the complete genome analysis of an early methicillin-resistant Staphylococcus aureus strain and a biofilm-producing methicillin-resistant Staphylococcus epidermidis strain.</title>
        <authorList>
            <person name="Gill S.R."/>
            <person name="Fouts D.E."/>
            <person name="Archer G.L."/>
            <person name="Mongodin E.F."/>
            <person name="DeBoy R.T."/>
            <person name="Ravel J."/>
            <person name="Paulsen I.T."/>
            <person name="Kolonay J.F."/>
            <person name="Brinkac L.M."/>
            <person name="Beanan M.J."/>
            <person name="Dodson R.J."/>
            <person name="Daugherty S.C."/>
            <person name="Madupu R."/>
            <person name="Angiuoli S.V."/>
            <person name="Durkin A.S."/>
            <person name="Haft D.H."/>
            <person name="Vamathevan J.J."/>
            <person name="Khouri H."/>
            <person name="Utterback T.R."/>
            <person name="Lee C."/>
            <person name="Dimitrov G."/>
            <person name="Jiang L."/>
            <person name="Qin H."/>
            <person name="Weidman J."/>
            <person name="Tran K."/>
            <person name="Kang K.H."/>
            <person name="Hance I.R."/>
            <person name="Nelson K.E."/>
            <person name="Fraser C.M."/>
        </authorList>
    </citation>
    <scope>NUCLEOTIDE SEQUENCE [LARGE SCALE GENOMIC DNA]</scope>
    <source>
        <strain>ATCC 35984 / DSM 28319 / BCRC 17069 / CCUG 31568 / BM 3577 / RP62A</strain>
    </source>
</reference>